<comment type="function">
    <text evidence="2">Component of the ubiquinol-cytochrome c reductase complex (complex III or cytochrome b-c1 complex) that is part of the mitochondrial respiratory chain. The b-c1 complex mediates electron transfer from ubiquinol to cytochrome c. Contributes to the generation of a proton gradient across the mitochondrial membrane that is then used for ATP synthesis.</text>
</comment>
<comment type="cofactor">
    <cofactor evidence="2">
        <name>heme b</name>
        <dbReference type="ChEBI" id="CHEBI:60344"/>
    </cofactor>
    <text evidence="2">Binds 2 heme b groups non-covalently.</text>
</comment>
<comment type="subunit">
    <text evidence="2">The cytochrome bc1 complex contains 11 subunits: 3 respiratory subunits (MT-CYB, CYC1 and UQCRFS1), 2 core proteins (UQCRC1 and UQCRC2) and 6 low-molecular weight proteins (UQCRH/QCR6, UQCRB/QCR7, UQCRQ/QCR8, UQCR10/QCR9, UQCR11/QCR10 and a cleavage product of UQCRFS1). This cytochrome bc1 complex then forms a dimer.</text>
</comment>
<comment type="subcellular location">
    <subcellularLocation>
        <location evidence="2">Mitochondrion inner membrane</location>
        <topology evidence="2">Multi-pass membrane protein</topology>
    </subcellularLocation>
</comment>
<comment type="miscellaneous">
    <text evidence="1">Heme 1 (or BL or b562) is low-potential and absorbs at about 562 nm, and heme 2 (or BH or b566) is high-potential and absorbs at about 566 nm.</text>
</comment>
<comment type="similarity">
    <text evidence="3 4">Belongs to the cytochrome b family.</text>
</comment>
<comment type="caution">
    <text evidence="2">The full-length protein contains only eight transmembrane helices, not nine as predicted by bioinformatics tools.</text>
</comment>
<feature type="chain" id="PRO_0000060663" description="Cytochrome b">
    <location>
        <begin position="1"/>
        <end position="379"/>
    </location>
</feature>
<feature type="transmembrane region" description="Helical" evidence="2">
    <location>
        <begin position="33"/>
        <end position="53"/>
    </location>
</feature>
<feature type="transmembrane region" description="Helical" evidence="2">
    <location>
        <begin position="77"/>
        <end position="98"/>
    </location>
</feature>
<feature type="transmembrane region" description="Helical" evidence="2">
    <location>
        <begin position="113"/>
        <end position="133"/>
    </location>
</feature>
<feature type="transmembrane region" description="Helical" evidence="2">
    <location>
        <begin position="178"/>
        <end position="198"/>
    </location>
</feature>
<feature type="transmembrane region" description="Helical" evidence="2">
    <location>
        <begin position="226"/>
        <end position="246"/>
    </location>
</feature>
<feature type="transmembrane region" description="Helical" evidence="2">
    <location>
        <begin position="288"/>
        <end position="308"/>
    </location>
</feature>
<feature type="transmembrane region" description="Helical" evidence="2">
    <location>
        <begin position="320"/>
        <end position="340"/>
    </location>
</feature>
<feature type="transmembrane region" description="Helical" evidence="2">
    <location>
        <begin position="347"/>
        <end position="367"/>
    </location>
</feature>
<feature type="binding site" description="axial binding residue" evidence="2">
    <location>
        <position position="83"/>
    </location>
    <ligand>
        <name>heme b</name>
        <dbReference type="ChEBI" id="CHEBI:60344"/>
        <label>b562</label>
    </ligand>
    <ligandPart>
        <name>Fe</name>
        <dbReference type="ChEBI" id="CHEBI:18248"/>
    </ligandPart>
</feature>
<feature type="binding site" description="axial binding residue" evidence="2">
    <location>
        <position position="97"/>
    </location>
    <ligand>
        <name>heme b</name>
        <dbReference type="ChEBI" id="CHEBI:60344"/>
        <label>b566</label>
    </ligand>
    <ligandPart>
        <name>Fe</name>
        <dbReference type="ChEBI" id="CHEBI:18248"/>
    </ligandPart>
</feature>
<feature type="binding site" description="axial binding residue" evidence="2">
    <location>
        <position position="182"/>
    </location>
    <ligand>
        <name>heme b</name>
        <dbReference type="ChEBI" id="CHEBI:60344"/>
        <label>b562</label>
    </ligand>
    <ligandPart>
        <name>Fe</name>
        <dbReference type="ChEBI" id="CHEBI:18248"/>
    </ligandPart>
</feature>
<feature type="binding site" description="axial binding residue" evidence="2">
    <location>
        <position position="196"/>
    </location>
    <ligand>
        <name>heme b</name>
        <dbReference type="ChEBI" id="CHEBI:60344"/>
        <label>b566</label>
    </ligand>
    <ligandPart>
        <name>Fe</name>
        <dbReference type="ChEBI" id="CHEBI:18248"/>
    </ligandPart>
</feature>
<feature type="binding site" evidence="2">
    <location>
        <position position="201"/>
    </location>
    <ligand>
        <name>a ubiquinone</name>
        <dbReference type="ChEBI" id="CHEBI:16389"/>
    </ligand>
</feature>
<organism>
    <name type="scientific">Balaenoptera musculus</name>
    <name type="common">Blue whale</name>
    <dbReference type="NCBI Taxonomy" id="9771"/>
    <lineage>
        <taxon>Eukaryota</taxon>
        <taxon>Metazoa</taxon>
        <taxon>Chordata</taxon>
        <taxon>Craniata</taxon>
        <taxon>Vertebrata</taxon>
        <taxon>Euteleostomi</taxon>
        <taxon>Mammalia</taxon>
        <taxon>Eutheria</taxon>
        <taxon>Laurasiatheria</taxon>
        <taxon>Artiodactyla</taxon>
        <taxon>Whippomorpha</taxon>
        <taxon>Cetacea</taxon>
        <taxon>Mysticeti</taxon>
        <taxon>Balaenopteridae</taxon>
        <taxon>Balaenoptera</taxon>
    </lineage>
</organism>
<proteinExistence type="inferred from homology"/>
<keyword id="KW-0249">Electron transport</keyword>
<keyword id="KW-0349">Heme</keyword>
<keyword id="KW-0408">Iron</keyword>
<keyword id="KW-0472">Membrane</keyword>
<keyword id="KW-0479">Metal-binding</keyword>
<keyword id="KW-0496">Mitochondrion</keyword>
<keyword id="KW-0999">Mitochondrion inner membrane</keyword>
<keyword id="KW-1185">Reference proteome</keyword>
<keyword id="KW-0679">Respiratory chain</keyword>
<keyword id="KW-0812">Transmembrane</keyword>
<keyword id="KW-1133">Transmembrane helix</keyword>
<keyword id="KW-0813">Transport</keyword>
<keyword id="KW-0830">Ubiquinone</keyword>
<gene>
    <name type="primary">MT-CYB</name>
    <name type="synonym">COB</name>
    <name type="synonym">CYTB</name>
    <name type="synonym">MTCYB</name>
</gene>
<geneLocation type="mitochondrion"/>
<accession>P41285</accession>
<name>CYB_BALMU</name>
<dbReference type="EMBL" id="X72204">
    <property type="protein sequence ID" value="CAA51007.1"/>
    <property type="molecule type" value="Genomic_DNA"/>
</dbReference>
<dbReference type="PIR" id="S41832">
    <property type="entry name" value="S41832"/>
</dbReference>
<dbReference type="RefSeq" id="NP_007068.1">
    <property type="nucleotide sequence ID" value="NC_001601.1"/>
</dbReference>
<dbReference type="SMR" id="P41285"/>
<dbReference type="GeneID" id="807738"/>
<dbReference type="KEGG" id="bmus:807738"/>
<dbReference type="CTD" id="4519"/>
<dbReference type="OrthoDB" id="244at2759"/>
<dbReference type="Proteomes" id="UP000694857">
    <property type="component" value="Mitochondrion MT"/>
</dbReference>
<dbReference type="GO" id="GO:0005743">
    <property type="term" value="C:mitochondrial inner membrane"/>
    <property type="evidence" value="ECO:0007669"/>
    <property type="project" value="UniProtKB-SubCell"/>
</dbReference>
<dbReference type="GO" id="GO:0045275">
    <property type="term" value="C:respiratory chain complex III"/>
    <property type="evidence" value="ECO:0007669"/>
    <property type="project" value="InterPro"/>
</dbReference>
<dbReference type="GO" id="GO:0046872">
    <property type="term" value="F:metal ion binding"/>
    <property type="evidence" value="ECO:0007669"/>
    <property type="project" value="UniProtKB-KW"/>
</dbReference>
<dbReference type="GO" id="GO:0008121">
    <property type="term" value="F:ubiquinol-cytochrome-c reductase activity"/>
    <property type="evidence" value="ECO:0007669"/>
    <property type="project" value="InterPro"/>
</dbReference>
<dbReference type="GO" id="GO:0006122">
    <property type="term" value="P:mitochondrial electron transport, ubiquinol to cytochrome c"/>
    <property type="evidence" value="ECO:0007669"/>
    <property type="project" value="TreeGrafter"/>
</dbReference>
<dbReference type="CDD" id="cd00290">
    <property type="entry name" value="cytochrome_b_C"/>
    <property type="match status" value="1"/>
</dbReference>
<dbReference type="CDD" id="cd00284">
    <property type="entry name" value="Cytochrome_b_N"/>
    <property type="match status" value="1"/>
</dbReference>
<dbReference type="FunFam" id="1.20.810.10:FF:000002">
    <property type="entry name" value="Cytochrome b"/>
    <property type="match status" value="1"/>
</dbReference>
<dbReference type="Gene3D" id="1.20.810.10">
    <property type="entry name" value="Cytochrome Bc1 Complex, Chain C"/>
    <property type="match status" value="1"/>
</dbReference>
<dbReference type="InterPro" id="IPR005798">
    <property type="entry name" value="Cyt_b/b6_C"/>
</dbReference>
<dbReference type="InterPro" id="IPR036150">
    <property type="entry name" value="Cyt_b/b6_C_sf"/>
</dbReference>
<dbReference type="InterPro" id="IPR005797">
    <property type="entry name" value="Cyt_b/b6_N"/>
</dbReference>
<dbReference type="InterPro" id="IPR027387">
    <property type="entry name" value="Cytb/b6-like_sf"/>
</dbReference>
<dbReference type="InterPro" id="IPR030689">
    <property type="entry name" value="Cytochrome_b"/>
</dbReference>
<dbReference type="InterPro" id="IPR048260">
    <property type="entry name" value="Cytochrome_b_C_euk/bac"/>
</dbReference>
<dbReference type="InterPro" id="IPR048259">
    <property type="entry name" value="Cytochrome_b_N_euk/bac"/>
</dbReference>
<dbReference type="InterPro" id="IPR016174">
    <property type="entry name" value="Di-haem_cyt_TM"/>
</dbReference>
<dbReference type="PANTHER" id="PTHR19271">
    <property type="entry name" value="CYTOCHROME B"/>
    <property type="match status" value="1"/>
</dbReference>
<dbReference type="PANTHER" id="PTHR19271:SF16">
    <property type="entry name" value="CYTOCHROME B"/>
    <property type="match status" value="1"/>
</dbReference>
<dbReference type="Pfam" id="PF00032">
    <property type="entry name" value="Cytochrom_B_C"/>
    <property type="match status" value="1"/>
</dbReference>
<dbReference type="Pfam" id="PF00033">
    <property type="entry name" value="Cytochrome_B"/>
    <property type="match status" value="1"/>
</dbReference>
<dbReference type="PIRSF" id="PIRSF038885">
    <property type="entry name" value="COB"/>
    <property type="match status" value="1"/>
</dbReference>
<dbReference type="SUPFAM" id="SSF81648">
    <property type="entry name" value="a domain/subunit of cytochrome bc1 complex (Ubiquinol-cytochrome c reductase)"/>
    <property type="match status" value="1"/>
</dbReference>
<dbReference type="SUPFAM" id="SSF81342">
    <property type="entry name" value="Transmembrane di-heme cytochromes"/>
    <property type="match status" value="1"/>
</dbReference>
<dbReference type="PROSITE" id="PS51003">
    <property type="entry name" value="CYTB_CTER"/>
    <property type="match status" value="1"/>
</dbReference>
<dbReference type="PROSITE" id="PS51002">
    <property type="entry name" value="CYTB_NTER"/>
    <property type="match status" value="1"/>
</dbReference>
<protein>
    <recommendedName>
        <fullName>Cytochrome b</fullName>
    </recommendedName>
    <alternativeName>
        <fullName>Complex III subunit 3</fullName>
    </alternativeName>
    <alternativeName>
        <fullName>Complex III subunit III</fullName>
    </alternativeName>
    <alternativeName>
        <fullName>Cytochrome b-c1 complex subunit 3</fullName>
    </alternativeName>
    <alternativeName>
        <fullName>Ubiquinol-cytochrome-c reductase complex cytochrome b subunit</fullName>
    </alternativeName>
</protein>
<sequence length="379" mass="42799">MTNIRKTHPLMKIINDAFIDLPTPSNISSWWNFGSLLGLCLIVQILTGLFLAMHYTPDTMTAFSSVTHICRDVNYGWVIRYLHANGASMFFICLYAHMGRGLYYGSHAFRETWNIGVILLFTVMATAFVGYVLPWGQMSFWGATVITNLLSAIPYIGTTLVEWIWGGFSVDKATLTRFFAFHFILPFIIMALAIVHLIFLHETGSNNPTGIPSDMDKIPFHPYYTIKDILGALLLILTLLMLTLFAPDLLGDPDNYTPANPLSTPAHIKPEWYFLFAYAILRSIPNKLGGVLALLLSILVLALIPMLHTSKQRSMMFRPFSQFLFWVLVADLLTLTWIGGQPVEHPYVIVGQLASILYFLLILVLMPVTSLIENKLMKW</sequence>
<reference key="1">
    <citation type="journal article" date="1993" name="J. Mol. Evol.">
        <title>Comparison between the complete mtDNA sequences of the blue and the fin whale, two species that can hybridize in nature.</title>
        <authorList>
            <person name="Arnason U."/>
            <person name="Gullberg A."/>
        </authorList>
    </citation>
    <scope>NUCLEOTIDE SEQUENCE [GENOMIC DNA]</scope>
</reference>
<evidence type="ECO:0000250" key="1"/>
<evidence type="ECO:0000250" key="2">
    <source>
        <dbReference type="UniProtKB" id="P00157"/>
    </source>
</evidence>
<evidence type="ECO:0000255" key="3">
    <source>
        <dbReference type="PROSITE-ProRule" id="PRU00967"/>
    </source>
</evidence>
<evidence type="ECO:0000255" key="4">
    <source>
        <dbReference type="PROSITE-ProRule" id="PRU00968"/>
    </source>
</evidence>